<proteinExistence type="inferred from homology"/>
<comment type="function">
    <text evidence="1">One of the primary rRNA binding proteins. Required for association of the 30S and 50S subunits to form the 70S ribosome, for tRNA binding and peptide bond formation. It has been suggested to have peptidyltransferase activity; this is somewhat controversial. Makes several contacts with the 16S rRNA in the 70S ribosome.</text>
</comment>
<comment type="subunit">
    <text evidence="1">Part of the 50S ribosomal subunit. Forms a bridge to the 30S subunit in the 70S ribosome.</text>
</comment>
<comment type="similarity">
    <text evidence="1">Belongs to the universal ribosomal protein uL2 family.</text>
</comment>
<dbReference type="EMBL" id="Y13228">
    <property type="protein sequence ID" value="CAA73675.1"/>
    <property type="molecule type" value="Genomic_DNA"/>
</dbReference>
<dbReference type="EMBL" id="LT708304">
    <property type="protein sequence ID" value="SIT99323.1"/>
    <property type="molecule type" value="Genomic_DNA"/>
</dbReference>
<dbReference type="RefSeq" id="NP_854382.1">
    <property type="nucleotide sequence ID" value="NC_002945.3"/>
</dbReference>
<dbReference type="RefSeq" id="WP_003403582.1">
    <property type="nucleotide sequence ID" value="NC_002945.4"/>
</dbReference>
<dbReference type="SMR" id="O06047"/>
<dbReference type="GeneID" id="45424669"/>
<dbReference type="KEGG" id="mbo:BQ2027_MB0724"/>
<dbReference type="PATRIC" id="fig|233413.5.peg.790"/>
<dbReference type="Proteomes" id="UP000001419">
    <property type="component" value="Chromosome"/>
</dbReference>
<dbReference type="GO" id="GO:0015934">
    <property type="term" value="C:large ribosomal subunit"/>
    <property type="evidence" value="ECO:0007669"/>
    <property type="project" value="InterPro"/>
</dbReference>
<dbReference type="GO" id="GO:0019843">
    <property type="term" value="F:rRNA binding"/>
    <property type="evidence" value="ECO:0007669"/>
    <property type="project" value="UniProtKB-UniRule"/>
</dbReference>
<dbReference type="GO" id="GO:0003735">
    <property type="term" value="F:structural constituent of ribosome"/>
    <property type="evidence" value="ECO:0007669"/>
    <property type="project" value="InterPro"/>
</dbReference>
<dbReference type="GO" id="GO:0016740">
    <property type="term" value="F:transferase activity"/>
    <property type="evidence" value="ECO:0007669"/>
    <property type="project" value="InterPro"/>
</dbReference>
<dbReference type="GO" id="GO:0002181">
    <property type="term" value="P:cytoplasmic translation"/>
    <property type="evidence" value="ECO:0007669"/>
    <property type="project" value="TreeGrafter"/>
</dbReference>
<dbReference type="FunFam" id="2.30.30.30:FF:000001">
    <property type="entry name" value="50S ribosomal protein L2"/>
    <property type="match status" value="1"/>
</dbReference>
<dbReference type="FunFam" id="2.40.50.140:FF:000003">
    <property type="entry name" value="50S ribosomal protein L2"/>
    <property type="match status" value="1"/>
</dbReference>
<dbReference type="FunFam" id="4.10.950.10:FF:000001">
    <property type="entry name" value="50S ribosomal protein L2"/>
    <property type="match status" value="1"/>
</dbReference>
<dbReference type="Gene3D" id="2.30.30.30">
    <property type="match status" value="1"/>
</dbReference>
<dbReference type="Gene3D" id="2.40.50.140">
    <property type="entry name" value="Nucleic acid-binding proteins"/>
    <property type="match status" value="1"/>
</dbReference>
<dbReference type="Gene3D" id="4.10.950.10">
    <property type="entry name" value="Ribosomal protein L2, domain 3"/>
    <property type="match status" value="1"/>
</dbReference>
<dbReference type="HAMAP" id="MF_01320_B">
    <property type="entry name" value="Ribosomal_uL2_B"/>
    <property type="match status" value="1"/>
</dbReference>
<dbReference type="InterPro" id="IPR012340">
    <property type="entry name" value="NA-bd_OB-fold"/>
</dbReference>
<dbReference type="InterPro" id="IPR014722">
    <property type="entry name" value="Rib_uL2_dom2"/>
</dbReference>
<dbReference type="InterPro" id="IPR002171">
    <property type="entry name" value="Ribosomal_uL2"/>
</dbReference>
<dbReference type="InterPro" id="IPR005880">
    <property type="entry name" value="Ribosomal_uL2_bac/org-type"/>
</dbReference>
<dbReference type="InterPro" id="IPR022669">
    <property type="entry name" value="Ribosomal_uL2_C"/>
</dbReference>
<dbReference type="InterPro" id="IPR022671">
    <property type="entry name" value="Ribosomal_uL2_CS"/>
</dbReference>
<dbReference type="InterPro" id="IPR014726">
    <property type="entry name" value="Ribosomal_uL2_dom3"/>
</dbReference>
<dbReference type="InterPro" id="IPR022666">
    <property type="entry name" value="Ribosomal_uL2_RNA-bd_dom"/>
</dbReference>
<dbReference type="InterPro" id="IPR008991">
    <property type="entry name" value="Translation_prot_SH3-like_sf"/>
</dbReference>
<dbReference type="NCBIfam" id="TIGR01171">
    <property type="entry name" value="rplB_bact"/>
    <property type="match status" value="1"/>
</dbReference>
<dbReference type="PANTHER" id="PTHR13691:SF5">
    <property type="entry name" value="LARGE RIBOSOMAL SUBUNIT PROTEIN UL2M"/>
    <property type="match status" value="1"/>
</dbReference>
<dbReference type="PANTHER" id="PTHR13691">
    <property type="entry name" value="RIBOSOMAL PROTEIN L2"/>
    <property type="match status" value="1"/>
</dbReference>
<dbReference type="Pfam" id="PF00181">
    <property type="entry name" value="Ribosomal_L2"/>
    <property type="match status" value="1"/>
</dbReference>
<dbReference type="Pfam" id="PF03947">
    <property type="entry name" value="Ribosomal_L2_C"/>
    <property type="match status" value="1"/>
</dbReference>
<dbReference type="PIRSF" id="PIRSF002158">
    <property type="entry name" value="Ribosomal_L2"/>
    <property type="match status" value="1"/>
</dbReference>
<dbReference type="SMART" id="SM01383">
    <property type="entry name" value="Ribosomal_L2"/>
    <property type="match status" value="1"/>
</dbReference>
<dbReference type="SMART" id="SM01382">
    <property type="entry name" value="Ribosomal_L2_C"/>
    <property type="match status" value="1"/>
</dbReference>
<dbReference type="SUPFAM" id="SSF50249">
    <property type="entry name" value="Nucleic acid-binding proteins"/>
    <property type="match status" value="1"/>
</dbReference>
<dbReference type="SUPFAM" id="SSF50104">
    <property type="entry name" value="Translation proteins SH3-like domain"/>
    <property type="match status" value="1"/>
</dbReference>
<dbReference type="PROSITE" id="PS00467">
    <property type="entry name" value="RIBOSOMAL_L2"/>
    <property type="match status" value="1"/>
</dbReference>
<sequence length="280" mass="30577">MAIRKYKPTTPGRRGASVSDFAEITRSTPEKSLVRPLHGRGGRNAHGRITTRHKGGGHKRAYRMIDFRRNDKDGVNAKVAHIEYDPNRTARIALLHYLDGEKRYIIAPNGLSQGDVVESGANADIKPGNNLPLRNIPAGTLIHAVELRPGGGAKLARSAGSSIQLLGKEASYASLRMPSGEIRRVDVRCRATVGEVGNAEQANINWGKAGRMRWKGKRPSVRGVVMNPVDHPHGGGEGKTSGGRHPVSPWGKPEGRTRNANKSSNKFIVRRRRTGKKHSR</sequence>
<feature type="chain" id="PRO_0000129578" description="Large ribosomal subunit protein uL2">
    <location>
        <begin position="1"/>
        <end position="280"/>
    </location>
</feature>
<feature type="region of interest" description="Disordered" evidence="2">
    <location>
        <begin position="27"/>
        <end position="59"/>
    </location>
</feature>
<feature type="region of interest" description="Disordered" evidence="2">
    <location>
        <begin position="225"/>
        <end position="280"/>
    </location>
</feature>
<feature type="compositionally biased region" description="Basic residues" evidence="2">
    <location>
        <begin position="37"/>
        <end position="59"/>
    </location>
</feature>
<feature type="compositionally biased region" description="Basic residues" evidence="2">
    <location>
        <begin position="268"/>
        <end position="280"/>
    </location>
</feature>
<feature type="sequence conflict" description="In Ref. 1; CAA73675." evidence="3" ref="1">
    <original>D</original>
    <variation>Y</variation>
    <location>
        <position position="20"/>
    </location>
</feature>
<feature type="sequence conflict" description="In Ref. 1; CAA73675." evidence="3" ref="1">
    <original>A</original>
    <variation>P</variation>
    <location>
        <position position="77"/>
    </location>
</feature>
<feature type="sequence conflict" description="In Ref. 1; CAA73675." evidence="3" ref="1">
    <original>G</original>
    <variation>A</variation>
    <location>
        <position position="216"/>
    </location>
</feature>
<protein>
    <recommendedName>
        <fullName evidence="1">Large ribosomal subunit protein uL2</fullName>
    </recommendedName>
    <alternativeName>
        <fullName evidence="3">50S ribosomal protein L2</fullName>
    </alternativeName>
</protein>
<gene>
    <name evidence="1" type="primary">rplB</name>
    <name type="ordered locus">BQ2027_MB0724</name>
</gene>
<accession>O06047</accession>
<accession>A0A1R3XX63</accession>
<accession>X2BFW0</accession>
<reference key="1">
    <citation type="journal article" date="1997" name="Mol. Microbiol.">
        <title>The role of ribosomal RNAs in macrolide resistance.</title>
        <authorList>
            <person name="Sander P."/>
            <person name="Prammananan T."/>
            <person name="Meier A."/>
            <person name="Frischkorn K."/>
            <person name="Boettger E.C."/>
        </authorList>
    </citation>
    <scope>NUCLEOTIDE SEQUENCE [GENOMIC DNA]</scope>
    <source>
        <strain>BCG</strain>
    </source>
</reference>
<reference key="2">
    <citation type="journal article" date="2003" name="Proc. Natl. Acad. Sci. U.S.A.">
        <title>The complete genome sequence of Mycobacterium bovis.</title>
        <authorList>
            <person name="Garnier T."/>
            <person name="Eiglmeier K."/>
            <person name="Camus J.-C."/>
            <person name="Medina N."/>
            <person name="Mansoor H."/>
            <person name="Pryor M."/>
            <person name="Duthoy S."/>
            <person name="Grondin S."/>
            <person name="Lacroix C."/>
            <person name="Monsempe C."/>
            <person name="Simon S."/>
            <person name="Harris B."/>
            <person name="Atkin R."/>
            <person name="Doggett J."/>
            <person name="Mayes R."/>
            <person name="Keating L."/>
            <person name="Wheeler P.R."/>
            <person name="Parkhill J."/>
            <person name="Barrell B.G."/>
            <person name="Cole S.T."/>
            <person name="Gordon S.V."/>
            <person name="Hewinson R.G."/>
        </authorList>
    </citation>
    <scope>NUCLEOTIDE SEQUENCE [LARGE SCALE GENOMIC DNA]</scope>
    <source>
        <strain>ATCC BAA-935 / AF2122/97</strain>
    </source>
</reference>
<reference key="3">
    <citation type="journal article" date="2017" name="Genome Announc.">
        <title>Updated reference genome sequence and annotation of Mycobacterium bovis AF2122/97.</title>
        <authorList>
            <person name="Malone K.M."/>
            <person name="Farrell D."/>
            <person name="Stuber T.P."/>
            <person name="Schubert O.T."/>
            <person name="Aebersold R."/>
            <person name="Robbe-Austerman S."/>
            <person name="Gordon S.V."/>
        </authorList>
    </citation>
    <scope>NUCLEOTIDE SEQUENCE [LARGE SCALE GENOMIC DNA]</scope>
    <scope>GENOME REANNOTATION</scope>
    <source>
        <strain>ATCC BAA-935 / AF2122/97</strain>
    </source>
</reference>
<keyword id="KW-1185">Reference proteome</keyword>
<keyword id="KW-0687">Ribonucleoprotein</keyword>
<keyword id="KW-0689">Ribosomal protein</keyword>
<keyword id="KW-0694">RNA-binding</keyword>
<keyword id="KW-0699">rRNA-binding</keyword>
<organism>
    <name type="scientific">Mycobacterium bovis (strain ATCC BAA-935 / AF2122/97)</name>
    <dbReference type="NCBI Taxonomy" id="233413"/>
    <lineage>
        <taxon>Bacteria</taxon>
        <taxon>Bacillati</taxon>
        <taxon>Actinomycetota</taxon>
        <taxon>Actinomycetes</taxon>
        <taxon>Mycobacteriales</taxon>
        <taxon>Mycobacteriaceae</taxon>
        <taxon>Mycobacterium</taxon>
        <taxon>Mycobacterium tuberculosis complex</taxon>
    </lineage>
</organism>
<name>RL2_MYCBO</name>
<evidence type="ECO:0000255" key="1">
    <source>
        <dbReference type="HAMAP-Rule" id="MF_01320"/>
    </source>
</evidence>
<evidence type="ECO:0000256" key="2">
    <source>
        <dbReference type="SAM" id="MobiDB-lite"/>
    </source>
</evidence>
<evidence type="ECO:0000305" key="3"/>